<sequence length="493" mass="52433">MTALNELTLAEARDGLKAKDFSAREIAQAHLDAIDRAKALNAYIVATPDRALKMAEVSDQKIAKGEARPLEGLPLGIKDLFATQGVDTTAGSKILEGFEPHYESNVSSQLWRDGAVMLGKLNLDEFAMGSSNETSAYGKTISPWRRQGSYAPLVPGGSSGGSAAAVAAHLCLGATATDTGGSIRQPAAFTGTVGIKPTYGRCSRWGIIAYASSLDQAGPIARTVQDCAILLGSMAGHDPRDTTSVDMPVPDFEAAISRGVKGLTIGIPKEYRVEGMPAEIQRLWDQGADWLREAGATIKEISLPHTQYALPAYYIVAPAEASSNLARYDGVRYGLRVPGKDIAGMYENTRAAGFGREVKRRIMIGTYVLSAGYYDAYYVRAQKIRTLIKRDFEAAYASGVDAILTPATPSAAFGIGEMASADPVEMYLNDVFTVTVNMAGLPGISVPAGLDAQGLPLGLQLIGRPFDEETLFAAAQTIENAAGRISLPKAWWA</sequence>
<proteinExistence type="inferred from homology"/>
<organism>
    <name type="scientific">Methylorubrum extorquens (strain PA1)</name>
    <name type="common">Methylobacterium extorquens</name>
    <dbReference type="NCBI Taxonomy" id="419610"/>
    <lineage>
        <taxon>Bacteria</taxon>
        <taxon>Pseudomonadati</taxon>
        <taxon>Pseudomonadota</taxon>
        <taxon>Alphaproteobacteria</taxon>
        <taxon>Hyphomicrobiales</taxon>
        <taxon>Methylobacteriaceae</taxon>
        <taxon>Methylorubrum</taxon>
    </lineage>
</organism>
<name>GATA_METEP</name>
<protein>
    <recommendedName>
        <fullName evidence="1">Glutamyl-tRNA(Gln) amidotransferase subunit A</fullName>
        <shortName evidence="1">Glu-ADT subunit A</shortName>
        <ecNumber evidence="1">6.3.5.7</ecNumber>
    </recommendedName>
</protein>
<keyword id="KW-0067">ATP-binding</keyword>
<keyword id="KW-0436">Ligase</keyword>
<keyword id="KW-0547">Nucleotide-binding</keyword>
<keyword id="KW-0648">Protein biosynthesis</keyword>
<dbReference type="EC" id="6.3.5.7" evidence="1"/>
<dbReference type="EMBL" id="CP000908">
    <property type="protein sequence ID" value="ABY31710.1"/>
    <property type="molecule type" value="Genomic_DNA"/>
</dbReference>
<dbReference type="RefSeq" id="WP_012254588.1">
    <property type="nucleotide sequence ID" value="NC_010172.1"/>
</dbReference>
<dbReference type="SMR" id="A9W748"/>
<dbReference type="KEGG" id="mex:Mext_3323"/>
<dbReference type="eggNOG" id="COG0154">
    <property type="taxonomic scope" value="Bacteria"/>
</dbReference>
<dbReference type="HOGENOM" id="CLU_009600_0_3_5"/>
<dbReference type="BioCyc" id="MEXT419610:MEXT_RS16690-MONOMER"/>
<dbReference type="GO" id="GO:0030956">
    <property type="term" value="C:glutamyl-tRNA(Gln) amidotransferase complex"/>
    <property type="evidence" value="ECO:0007669"/>
    <property type="project" value="InterPro"/>
</dbReference>
<dbReference type="GO" id="GO:0005524">
    <property type="term" value="F:ATP binding"/>
    <property type="evidence" value="ECO:0007669"/>
    <property type="project" value="UniProtKB-KW"/>
</dbReference>
<dbReference type="GO" id="GO:0050567">
    <property type="term" value="F:glutaminyl-tRNA synthase (glutamine-hydrolyzing) activity"/>
    <property type="evidence" value="ECO:0007669"/>
    <property type="project" value="UniProtKB-UniRule"/>
</dbReference>
<dbReference type="GO" id="GO:0006412">
    <property type="term" value="P:translation"/>
    <property type="evidence" value="ECO:0007669"/>
    <property type="project" value="UniProtKB-UniRule"/>
</dbReference>
<dbReference type="Gene3D" id="3.90.1300.10">
    <property type="entry name" value="Amidase signature (AS) domain"/>
    <property type="match status" value="1"/>
</dbReference>
<dbReference type="HAMAP" id="MF_00120">
    <property type="entry name" value="GatA"/>
    <property type="match status" value="1"/>
</dbReference>
<dbReference type="InterPro" id="IPR000120">
    <property type="entry name" value="Amidase"/>
</dbReference>
<dbReference type="InterPro" id="IPR020556">
    <property type="entry name" value="Amidase_CS"/>
</dbReference>
<dbReference type="InterPro" id="IPR023631">
    <property type="entry name" value="Amidase_dom"/>
</dbReference>
<dbReference type="InterPro" id="IPR036928">
    <property type="entry name" value="AS_sf"/>
</dbReference>
<dbReference type="InterPro" id="IPR004412">
    <property type="entry name" value="GatA"/>
</dbReference>
<dbReference type="NCBIfam" id="TIGR00132">
    <property type="entry name" value="gatA"/>
    <property type="match status" value="1"/>
</dbReference>
<dbReference type="PANTHER" id="PTHR11895:SF151">
    <property type="entry name" value="GLUTAMYL-TRNA(GLN) AMIDOTRANSFERASE SUBUNIT A"/>
    <property type="match status" value="1"/>
</dbReference>
<dbReference type="PANTHER" id="PTHR11895">
    <property type="entry name" value="TRANSAMIDASE"/>
    <property type="match status" value="1"/>
</dbReference>
<dbReference type="Pfam" id="PF01425">
    <property type="entry name" value="Amidase"/>
    <property type="match status" value="1"/>
</dbReference>
<dbReference type="SUPFAM" id="SSF75304">
    <property type="entry name" value="Amidase signature (AS) enzymes"/>
    <property type="match status" value="1"/>
</dbReference>
<dbReference type="PROSITE" id="PS00571">
    <property type="entry name" value="AMIDASES"/>
    <property type="match status" value="1"/>
</dbReference>
<feature type="chain" id="PRO_1000095147" description="Glutamyl-tRNA(Gln) amidotransferase subunit A">
    <location>
        <begin position="1"/>
        <end position="493"/>
    </location>
</feature>
<feature type="active site" description="Charge relay system" evidence="1">
    <location>
        <position position="78"/>
    </location>
</feature>
<feature type="active site" description="Charge relay system" evidence="1">
    <location>
        <position position="158"/>
    </location>
</feature>
<feature type="active site" description="Acyl-ester intermediate" evidence="1">
    <location>
        <position position="182"/>
    </location>
</feature>
<comment type="function">
    <text evidence="1">Allows the formation of correctly charged Gln-tRNA(Gln) through the transamidation of misacylated Glu-tRNA(Gln) in organisms which lack glutaminyl-tRNA synthetase. The reaction takes place in the presence of glutamine and ATP through an activated gamma-phospho-Glu-tRNA(Gln).</text>
</comment>
<comment type="catalytic activity">
    <reaction evidence="1">
        <text>L-glutamyl-tRNA(Gln) + L-glutamine + ATP + H2O = L-glutaminyl-tRNA(Gln) + L-glutamate + ADP + phosphate + H(+)</text>
        <dbReference type="Rhea" id="RHEA:17521"/>
        <dbReference type="Rhea" id="RHEA-COMP:9681"/>
        <dbReference type="Rhea" id="RHEA-COMP:9684"/>
        <dbReference type="ChEBI" id="CHEBI:15377"/>
        <dbReference type="ChEBI" id="CHEBI:15378"/>
        <dbReference type="ChEBI" id="CHEBI:29985"/>
        <dbReference type="ChEBI" id="CHEBI:30616"/>
        <dbReference type="ChEBI" id="CHEBI:43474"/>
        <dbReference type="ChEBI" id="CHEBI:58359"/>
        <dbReference type="ChEBI" id="CHEBI:78520"/>
        <dbReference type="ChEBI" id="CHEBI:78521"/>
        <dbReference type="ChEBI" id="CHEBI:456216"/>
        <dbReference type="EC" id="6.3.5.7"/>
    </reaction>
</comment>
<comment type="subunit">
    <text evidence="1">Heterotrimer of A, B and C subunits.</text>
</comment>
<comment type="similarity">
    <text evidence="1">Belongs to the amidase family. GatA subfamily.</text>
</comment>
<gene>
    <name evidence="1" type="primary">gatA</name>
    <name type="ordered locus">Mext_3323</name>
</gene>
<reference key="1">
    <citation type="submission" date="2007-12" db="EMBL/GenBank/DDBJ databases">
        <title>Complete sequence of Methylobacterium extorquens PA1.</title>
        <authorList>
            <consortium name="US DOE Joint Genome Institute"/>
            <person name="Copeland A."/>
            <person name="Lucas S."/>
            <person name="Lapidus A."/>
            <person name="Barry K."/>
            <person name="Glavina del Rio T."/>
            <person name="Dalin E."/>
            <person name="Tice H."/>
            <person name="Pitluck S."/>
            <person name="Saunders E."/>
            <person name="Brettin T."/>
            <person name="Bruce D."/>
            <person name="Detter J.C."/>
            <person name="Han C."/>
            <person name="Schmutz J."/>
            <person name="Larimer F."/>
            <person name="Land M."/>
            <person name="Hauser L."/>
            <person name="Kyrpides N."/>
            <person name="Kim E."/>
            <person name="Marx C."/>
            <person name="Richardson P."/>
        </authorList>
    </citation>
    <scope>NUCLEOTIDE SEQUENCE [LARGE SCALE GENOMIC DNA]</scope>
    <source>
        <strain>PA1</strain>
    </source>
</reference>
<evidence type="ECO:0000255" key="1">
    <source>
        <dbReference type="HAMAP-Rule" id="MF_00120"/>
    </source>
</evidence>
<accession>A9W748</accession>